<protein>
    <recommendedName>
        <fullName evidence="2">Tachykinin-related peptide 5</fullName>
        <shortName evidence="2">TKRP-5</shortName>
    </recommendedName>
</protein>
<accession>P86573</accession>
<name>TRP5_EUSSE</name>
<proteinExistence type="evidence at protein level"/>
<comment type="subcellular location">
    <subcellularLocation>
        <location evidence="1 3">Secreted</location>
    </subcellularLocation>
</comment>
<comment type="tissue specificity">
    <text evidence="1">Expressed in the antennal lobe (at protein level).</text>
</comment>
<feature type="peptide" id="PRO_0000395642" description="Tachykinin-related peptide 5" evidence="1">
    <location>
        <begin position="1"/>
        <end position="10"/>
    </location>
</feature>
<feature type="modified residue" description="Arginine amide" evidence="1">
    <location>
        <position position="10"/>
    </location>
</feature>
<evidence type="ECO:0000269" key="1">
    <source>
    </source>
</evidence>
<evidence type="ECO:0000303" key="2">
    <source>
    </source>
</evidence>
<evidence type="ECO:0000305" key="3"/>
<keyword id="KW-0027">Amidation</keyword>
<keyword id="KW-0903">Direct protein sequencing</keyword>
<keyword id="KW-0527">Neuropeptide</keyword>
<keyword id="KW-0964">Secreted</keyword>
<sequence length="10" mass="1075">APLMGFQGVR</sequence>
<reference evidence="3" key="1">
    <citation type="journal article" date="2009" name="Peptides">
        <title>Neuropeptides in Heteroptera: identification of allatotropin-related peptide and tachykinin-related peptides using MALDI-TOF mass spectrometry.</title>
        <authorList>
            <person name="Neupert S."/>
            <person name="Russell W.K."/>
            <person name="Russell D.H."/>
            <person name="Lopez J.D. Jr."/>
            <person name="Predel R."/>
            <person name="Nachman R.J."/>
        </authorList>
    </citation>
    <scope>PROTEIN SEQUENCE</scope>
    <scope>SUBCELLULAR LOCATION</scope>
    <scope>TISSUE SPECIFICITY</scope>
    <scope>AMIDATION AT ARG-10</scope>
    <source>
        <tissue evidence="1">Antennal lobe</tissue>
    </source>
</reference>
<dbReference type="GO" id="GO:0005576">
    <property type="term" value="C:extracellular region"/>
    <property type="evidence" value="ECO:0007005"/>
    <property type="project" value="UniProtKB"/>
</dbReference>
<dbReference type="GO" id="GO:0007218">
    <property type="term" value="P:neuropeptide signaling pathway"/>
    <property type="evidence" value="ECO:0007669"/>
    <property type="project" value="UniProtKB-KW"/>
</dbReference>
<organism>
    <name type="scientific">Euschistus servus</name>
    <name type="common">Brown stink bug</name>
    <dbReference type="NCBI Taxonomy" id="756488"/>
    <lineage>
        <taxon>Eukaryota</taxon>
        <taxon>Metazoa</taxon>
        <taxon>Ecdysozoa</taxon>
        <taxon>Arthropoda</taxon>
        <taxon>Hexapoda</taxon>
        <taxon>Insecta</taxon>
        <taxon>Pterygota</taxon>
        <taxon>Neoptera</taxon>
        <taxon>Paraneoptera</taxon>
        <taxon>Hemiptera</taxon>
        <taxon>Heteroptera</taxon>
        <taxon>Panheteroptera</taxon>
        <taxon>Pentatomomorpha</taxon>
        <taxon>Pentatomoidea</taxon>
        <taxon>Pentatomidae</taxon>
        <taxon>Pentatominae</taxon>
        <taxon>Euschistus</taxon>
    </lineage>
</organism>